<reference key="1">
    <citation type="journal article" date="1996" name="Science">
        <title>Complete genome sequence of the methanogenic archaeon, Methanococcus jannaschii.</title>
        <authorList>
            <person name="Bult C.J."/>
            <person name="White O."/>
            <person name="Olsen G.J."/>
            <person name="Zhou L."/>
            <person name="Fleischmann R.D."/>
            <person name="Sutton G.G."/>
            <person name="Blake J.A."/>
            <person name="FitzGerald L.M."/>
            <person name="Clayton R.A."/>
            <person name="Gocayne J.D."/>
            <person name="Kerlavage A.R."/>
            <person name="Dougherty B.A."/>
            <person name="Tomb J.-F."/>
            <person name="Adams M.D."/>
            <person name="Reich C.I."/>
            <person name="Overbeek R."/>
            <person name="Kirkness E.F."/>
            <person name="Weinstock K.G."/>
            <person name="Merrick J.M."/>
            <person name="Glodek A."/>
            <person name="Scott J.L."/>
            <person name="Geoghagen N.S.M."/>
            <person name="Weidman J.F."/>
            <person name="Fuhrmann J.L."/>
            <person name="Nguyen D."/>
            <person name="Utterback T.R."/>
            <person name="Kelley J.M."/>
            <person name="Peterson J.D."/>
            <person name="Sadow P.W."/>
            <person name="Hanna M.C."/>
            <person name="Cotton M.D."/>
            <person name="Roberts K.M."/>
            <person name="Hurst M.A."/>
            <person name="Kaine B.P."/>
            <person name="Borodovsky M."/>
            <person name="Klenk H.-P."/>
            <person name="Fraser C.M."/>
            <person name="Smith H.O."/>
            <person name="Woese C.R."/>
            <person name="Venter J.C."/>
        </authorList>
    </citation>
    <scope>NUCLEOTIDE SEQUENCE [LARGE SCALE GENOMIC DNA]</scope>
    <source>
        <strain>ATCC 43067 / DSM 2661 / JAL-1 / JCM 10045 / NBRC 100440</strain>
    </source>
</reference>
<proteinExistence type="inferred from homology"/>
<accession>Q58715</accession>
<feature type="chain" id="PRO_0000214820" description="Uncharacterized sodium-dependent transporter MJ1319">
    <location>
        <begin position="1"/>
        <end position="492"/>
    </location>
</feature>
<feature type="transmembrane region" description="Helical" evidence="1">
    <location>
        <begin position="13"/>
        <end position="33"/>
    </location>
</feature>
<feature type="transmembrane region" description="Helical" evidence="1">
    <location>
        <begin position="42"/>
        <end position="62"/>
    </location>
</feature>
<feature type="transmembrane region" description="Helical" evidence="1">
    <location>
        <begin position="97"/>
        <end position="117"/>
    </location>
</feature>
<feature type="transmembrane region" description="Helical" evidence="1">
    <location>
        <begin position="150"/>
        <end position="170"/>
    </location>
</feature>
<feature type="transmembrane region" description="Helical" evidence="1">
    <location>
        <begin position="180"/>
        <end position="200"/>
    </location>
</feature>
<feature type="transmembrane region" description="Helical" evidence="1">
    <location>
        <begin position="222"/>
        <end position="242"/>
    </location>
</feature>
<feature type="transmembrane region" description="Helical" evidence="1">
    <location>
        <begin position="258"/>
        <end position="278"/>
    </location>
</feature>
<feature type="transmembrane region" description="Helical" evidence="1">
    <location>
        <begin position="320"/>
        <end position="340"/>
    </location>
</feature>
<feature type="transmembrane region" description="Helical" evidence="1">
    <location>
        <begin position="359"/>
        <end position="379"/>
    </location>
</feature>
<feature type="transmembrane region" description="Helical" evidence="1">
    <location>
        <begin position="391"/>
        <end position="411"/>
    </location>
</feature>
<feature type="transmembrane region" description="Helical" evidence="1">
    <location>
        <begin position="428"/>
        <end position="448"/>
    </location>
</feature>
<feature type="transmembrane region" description="Helical" evidence="1">
    <location>
        <begin position="463"/>
        <end position="483"/>
    </location>
</feature>
<protein>
    <recommendedName>
        <fullName>Uncharacterized sodium-dependent transporter MJ1319</fullName>
    </recommendedName>
</protein>
<keyword id="KW-1003">Cell membrane</keyword>
<keyword id="KW-0472">Membrane</keyword>
<keyword id="KW-1185">Reference proteome</keyword>
<keyword id="KW-0769">Symport</keyword>
<keyword id="KW-0812">Transmembrane</keyword>
<keyword id="KW-1133">Transmembrane helix</keyword>
<keyword id="KW-0813">Transport</keyword>
<comment type="function">
    <text>Putative sodium-dependent transporter.</text>
</comment>
<comment type="subcellular location">
    <subcellularLocation>
        <location>Cell membrane</location>
        <topology>Multi-pass membrane protein</topology>
    </subcellularLocation>
</comment>
<comment type="similarity">
    <text evidence="2">Belongs to the sodium:neurotransmitter symporter (SNF) (TC 2.A.22) family.</text>
</comment>
<name>Y1319_METJA</name>
<dbReference type="EMBL" id="L77117">
    <property type="protein sequence ID" value="AAB99329.1"/>
    <property type="molecule type" value="Genomic_DNA"/>
</dbReference>
<dbReference type="PIR" id="F64464">
    <property type="entry name" value="F64464"/>
</dbReference>
<dbReference type="SMR" id="Q58715"/>
<dbReference type="FunCoup" id="Q58715">
    <property type="interactions" value="7"/>
</dbReference>
<dbReference type="STRING" id="243232.MJ_1319"/>
<dbReference type="TCDB" id="2.A.22.5.1">
    <property type="family name" value="the neurotransmitter:sodium symporter (nss) family"/>
</dbReference>
<dbReference type="PaxDb" id="243232-MJ_1319"/>
<dbReference type="EnsemblBacteria" id="AAB99329">
    <property type="protein sequence ID" value="AAB99329"/>
    <property type="gene ID" value="MJ_1319"/>
</dbReference>
<dbReference type="KEGG" id="mja:MJ_1319"/>
<dbReference type="eggNOG" id="arCOG04466">
    <property type="taxonomic scope" value="Archaea"/>
</dbReference>
<dbReference type="HOGENOM" id="CLU_006855_3_3_2"/>
<dbReference type="InParanoid" id="Q58715"/>
<dbReference type="PhylomeDB" id="Q58715"/>
<dbReference type="Proteomes" id="UP000000805">
    <property type="component" value="Chromosome"/>
</dbReference>
<dbReference type="GO" id="GO:0005886">
    <property type="term" value="C:plasma membrane"/>
    <property type="evidence" value="ECO:0000318"/>
    <property type="project" value="GO_Central"/>
</dbReference>
<dbReference type="GO" id="GO:0015293">
    <property type="term" value="F:symporter activity"/>
    <property type="evidence" value="ECO:0007669"/>
    <property type="project" value="UniProtKB-KW"/>
</dbReference>
<dbReference type="GO" id="GO:0035725">
    <property type="term" value="P:sodium ion transmembrane transport"/>
    <property type="evidence" value="ECO:0000318"/>
    <property type="project" value="GO_Central"/>
</dbReference>
<dbReference type="CDD" id="cd10334">
    <property type="entry name" value="SLC6sbd_u1"/>
    <property type="match status" value="1"/>
</dbReference>
<dbReference type="InterPro" id="IPR000175">
    <property type="entry name" value="Na/ntran_symport"/>
</dbReference>
<dbReference type="InterPro" id="IPR037272">
    <property type="entry name" value="SNS_sf"/>
</dbReference>
<dbReference type="NCBIfam" id="NF037979">
    <property type="entry name" value="Na_transp"/>
    <property type="match status" value="1"/>
</dbReference>
<dbReference type="PANTHER" id="PTHR11616:SF240">
    <property type="entry name" value="BLOATED TUBULES, ISOFORM B-RELATED"/>
    <property type="match status" value="1"/>
</dbReference>
<dbReference type="PANTHER" id="PTHR11616">
    <property type="entry name" value="SODIUM/CHLORIDE DEPENDENT TRANSPORTER"/>
    <property type="match status" value="1"/>
</dbReference>
<dbReference type="Pfam" id="PF00209">
    <property type="entry name" value="SNF"/>
    <property type="match status" value="2"/>
</dbReference>
<dbReference type="PRINTS" id="PR00176">
    <property type="entry name" value="NANEUSMPORT"/>
</dbReference>
<dbReference type="SUPFAM" id="SSF161070">
    <property type="entry name" value="SNF-like"/>
    <property type="match status" value="1"/>
</dbReference>
<dbReference type="PROSITE" id="PS00610">
    <property type="entry name" value="NA_NEUROTRAN_SYMP_1"/>
    <property type="match status" value="1"/>
</dbReference>
<dbReference type="PROSITE" id="PS50267">
    <property type="entry name" value="NA_NEUROTRAN_SYMP_3"/>
    <property type="match status" value="1"/>
</dbReference>
<sequence length="492" mass="53468">MSYMERESWSSNLGFILASVGSAIGLGNIWRFGYMVYTNGGGAFLIPYIVALLCVGIPLMILEFAIGHYTKKSAPLALEKLHKGSEWTGWFAVISGFIITSYYVVIIAWCLYYLIILVIYGYPSDPNAYFFHNILQISSGVEDIGGVSYGILVSTLAVWGIVALILSAGIKNGLEKANKIMIPFLLFLIILLVLNALTLPGALTGIEWYLTPDFSALFNYNVWLSAFSQIFFSLSLGFGILIAYASYLPKKSDLTINAVTVSLLNCGFSFLAGFAVFGTLGYMSYTSGIPLDKAVSEGIGLAFVTFPKALSLLPFASRLFGIVFFLALVFAGISSAVSIVEASVSAIIDKFSLSRKKALLAVLALFIIISPIFTTGAGLYYLDIIDHFASGYLLPIAAILEIIIAIWLFGGDKLREHVNKLSEIKLGVWWKYLAGVVSPIILTAVVFLDASNVLTSGYGGYKTTYVIFGALIIPLAFVVSVILQKMKTIKGW</sequence>
<organism>
    <name type="scientific">Methanocaldococcus jannaschii (strain ATCC 43067 / DSM 2661 / JAL-1 / JCM 10045 / NBRC 100440)</name>
    <name type="common">Methanococcus jannaschii</name>
    <dbReference type="NCBI Taxonomy" id="243232"/>
    <lineage>
        <taxon>Archaea</taxon>
        <taxon>Methanobacteriati</taxon>
        <taxon>Methanobacteriota</taxon>
        <taxon>Methanomada group</taxon>
        <taxon>Methanococci</taxon>
        <taxon>Methanococcales</taxon>
        <taxon>Methanocaldococcaceae</taxon>
        <taxon>Methanocaldococcus</taxon>
    </lineage>
</organism>
<evidence type="ECO:0000255" key="1"/>
<evidence type="ECO:0000305" key="2"/>
<gene>
    <name type="ordered locus">MJ1319</name>
</gene>